<comment type="function">
    <text evidence="4 5">Plays a role in alae formation in L1 and dauer stage larvae.</text>
</comment>
<comment type="subcellular location">
    <subcellularLocation>
        <location evidence="1">Cell membrane</location>
        <topology evidence="6">Single-pass type I membrane protein</topology>
    </subcellularLocation>
</comment>
<comment type="alternative products">
    <event type="alternative splicing"/>
    <isoform>
        <id>Q21808-1</id>
        <name evidence="8">a</name>
        <sequence type="displayed"/>
    </isoform>
    <isoform>
        <id>Q21808-2</id>
        <name evidence="9">b</name>
        <sequence type="described" ref="VSP_060615"/>
    </isoform>
</comment>
<comment type="developmental stage">
    <text evidence="4">Expressed in seam cells in three-fold stage embryos and during dauer larvae formation (PubMed:15936343). Not expressed in adults (PubMed:15936343).</text>
</comment>
<comment type="disruption phenotype">
    <text evidence="4">RNAi-mediated knockdown results in disrupted alae formation in L1 and dauer stage larvae with alae often present on only one side of the larvae.</text>
</comment>
<accession>Q21808</accession>
<accession>D0VWM7</accession>
<evidence type="ECO:0000255" key="1"/>
<evidence type="ECO:0000255" key="2">
    <source>
        <dbReference type="PROSITE-ProRule" id="PRU00375"/>
    </source>
</evidence>
<evidence type="ECO:0000255" key="3">
    <source>
        <dbReference type="PROSITE-ProRule" id="PRU00498"/>
    </source>
</evidence>
<evidence type="ECO:0000269" key="4">
    <source>
    </source>
</evidence>
<evidence type="ECO:0000269" key="5">
    <source>
    </source>
</evidence>
<evidence type="ECO:0000305" key="6"/>
<evidence type="ECO:0000312" key="7">
    <source>
        <dbReference type="Proteomes" id="UP000001940"/>
    </source>
</evidence>
<evidence type="ECO:0000312" key="8">
    <source>
        <dbReference type="WormBase" id="R07E3.3a"/>
    </source>
</evidence>
<evidence type="ECO:0000312" key="9">
    <source>
        <dbReference type="WormBase" id="R07E3.3b"/>
    </source>
</evidence>
<sequence>MNFILAVFAIILLQAVRGEIDNAIVGDPSVECGDDFFEVNIYHSCSCVGNFIIKVKFDTRTTFHGLAFVQNHLDNPDCRSFASKTDSAKNSSLRLTFDQCAIEKRHSTSPRGLFLSTNVVVAFNPEFLTKNDRVFKVQCFYMEMERRIQKVIQISMPPPTMHSKQLNMPVCKYEVLDGSPTGPPVYFATVGQMVYHKWTCDTEHENTFCMLVHSCFVDDGNGQRVQLLNDKGCALDKYLLTNLEYPTDLMAGREAHVYKYADRDNMYFDCQISITVKEPGLDYCDVPSCPDPPRRRRSNTLPAPDDNITAIAAHIEYEDSEIISDYIIPNDDIISLNWLQRNFDMRISELCMTAIGTTLLVFLNAFLFIISLVSIVHVCCFRTSPKLEKTKSTML</sequence>
<keyword id="KW-0025">Alternative splicing</keyword>
<keyword id="KW-1003">Cell membrane</keyword>
<keyword id="KW-0193">Cuticle</keyword>
<keyword id="KW-0325">Glycoprotein</keyword>
<keyword id="KW-0472">Membrane</keyword>
<keyword id="KW-1185">Reference proteome</keyword>
<keyword id="KW-0732">Signal</keyword>
<keyword id="KW-0812">Transmembrane</keyword>
<keyword id="KW-1133">Transmembrane helix</keyword>
<feature type="signal peptide" evidence="1">
    <location>
        <begin position="1"/>
        <end position="18"/>
    </location>
</feature>
<feature type="chain" id="PRO_5004199434" description="Cuticlin-5">
    <location>
        <begin position="19"/>
        <end position="395"/>
    </location>
</feature>
<feature type="topological domain" description="Extracellular" evidence="6">
    <location>
        <begin position="19"/>
        <end position="358"/>
    </location>
</feature>
<feature type="transmembrane region" description="Helical" evidence="1">
    <location>
        <begin position="359"/>
        <end position="379"/>
    </location>
</feature>
<feature type="topological domain" description="Cytoplasmic" evidence="6">
    <location>
        <begin position="380"/>
        <end position="395"/>
    </location>
</feature>
<feature type="domain" description="ZP" evidence="2">
    <location>
        <begin position="46"/>
        <end position="291"/>
    </location>
</feature>
<feature type="glycosylation site" description="N-linked (GlcNAc...) asparagine" evidence="3">
    <location>
        <position position="90"/>
    </location>
</feature>
<feature type="glycosylation site" description="N-linked (GlcNAc...) asparagine" evidence="3">
    <location>
        <position position="307"/>
    </location>
</feature>
<feature type="splice variant" id="VSP_060615" description="In isoform b." evidence="6">
    <location>
        <begin position="39"/>
        <end position="54"/>
    </location>
</feature>
<reference evidence="7" key="1">
    <citation type="journal article" date="1998" name="Science">
        <title>Genome sequence of the nematode C. elegans: a platform for investigating biology.</title>
        <authorList>
            <consortium name="The C. elegans sequencing consortium"/>
        </authorList>
    </citation>
    <scope>NUCLEOTIDE SEQUENCE [LARGE SCALE GENOMIC DNA]</scope>
    <source>
        <strain evidence="7">Bristol N2</strain>
    </source>
</reference>
<reference evidence="6" key="2">
    <citation type="journal article" date="2005" name="Dev. Biol.">
        <title>The Zona Pellucida domain containing proteins, CUT-1, CUT-3 and CUT-5, play essential roles in the development of the larval alae in Caenorhabditis elegans.</title>
        <authorList>
            <person name="Sapio M.R."/>
            <person name="Hilliard M.A."/>
            <person name="Cermola M."/>
            <person name="Favre R."/>
            <person name="Bazzicalupo P."/>
        </authorList>
    </citation>
    <scope>FUNCTION</scope>
    <scope>DEVELOPMENTAL STAGE</scope>
    <scope>DISRUPTION PHENOTYPE</scope>
</reference>
<reference evidence="6" key="3">
    <citation type="journal article" date="2019" name="Genetics">
        <title>Epidermal Remodeling in Caenorhabditis elegans Dauers Requires the Nidogen Domain Protein DEX-1.</title>
        <authorList>
            <person name="Flatt K.M."/>
            <person name="Beshers C."/>
            <person name="Unal C."/>
            <person name="Cohen J.D."/>
            <person name="Sundaram M.V."/>
            <person name="Schroeder N.E."/>
        </authorList>
    </citation>
    <scope>FUNCTION</scope>
</reference>
<gene>
    <name evidence="8" type="primary">cut-5</name>
    <name evidence="8" type="ORF">R07E3.3</name>
</gene>
<dbReference type="EMBL" id="BX284606">
    <property type="protein sequence ID" value="CAA89068.3"/>
    <property type="molecule type" value="Genomic_DNA"/>
</dbReference>
<dbReference type="EMBL" id="BX284606">
    <property type="protein sequence ID" value="CBH29667.1"/>
    <property type="molecule type" value="Genomic_DNA"/>
</dbReference>
<dbReference type="RefSeq" id="NP_001257099.1">
    <molecule id="Q21808-2"/>
    <property type="nucleotide sequence ID" value="NM_001270170.4"/>
</dbReference>
<dbReference type="RefSeq" id="NP_001257100.1">
    <molecule id="Q21808-1"/>
    <property type="nucleotide sequence ID" value="NM_001270171.3"/>
</dbReference>
<dbReference type="DIP" id="DIP-27317N"/>
<dbReference type="FunCoup" id="Q21808">
    <property type="interactions" value="105"/>
</dbReference>
<dbReference type="STRING" id="6239.R07E3.3a.1"/>
<dbReference type="GlyCosmos" id="Q21808">
    <property type="glycosylation" value="2 sites, No reported glycans"/>
</dbReference>
<dbReference type="PaxDb" id="6239-R07E3.3a"/>
<dbReference type="EnsemblMetazoa" id="R07E3.3a.1">
    <molecule id="Q21808-1"/>
    <property type="protein sequence ID" value="R07E3.3a.1"/>
    <property type="gene ID" value="WBGene00011104"/>
</dbReference>
<dbReference type="EnsemblMetazoa" id="R07E3.3b.1">
    <molecule id="Q21808-2"/>
    <property type="protein sequence ID" value="R07E3.3b.1"/>
    <property type="gene ID" value="WBGene00011104"/>
</dbReference>
<dbReference type="GeneID" id="187677"/>
<dbReference type="KEGG" id="cel:CELE_R07E3.3"/>
<dbReference type="UCSC" id="R07E3.3">
    <molecule id="Q21808-1"/>
    <property type="organism name" value="c. elegans"/>
</dbReference>
<dbReference type="AGR" id="WB:WBGene00011104"/>
<dbReference type="CTD" id="187677"/>
<dbReference type="WormBase" id="R07E3.3a">
    <molecule id="Q21808-1"/>
    <property type="protein sequence ID" value="CE42566"/>
    <property type="gene ID" value="WBGene00011104"/>
    <property type="gene designation" value="cut-5"/>
</dbReference>
<dbReference type="WormBase" id="R07E3.3b">
    <molecule id="Q21808-2"/>
    <property type="protein sequence ID" value="CE40396"/>
    <property type="gene ID" value="WBGene00011104"/>
    <property type="gene designation" value="cut-5"/>
</dbReference>
<dbReference type="eggNOG" id="ENOG502QUTR">
    <property type="taxonomic scope" value="Eukaryota"/>
</dbReference>
<dbReference type="GeneTree" id="ENSGT00940000163650"/>
<dbReference type="HOGENOM" id="CLU_037896_3_0_1"/>
<dbReference type="InParanoid" id="Q21808"/>
<dbReference type="OMA" id="QMVYHKW"/>
<dbReference type="OrthoDB" id="6139674at2759"/>
<dbReference type="PhylomeDB" id="Q21808"/>
<dbReference type="PRO" id="PR:Q21808"/>
<dbReference type="Proteomes" id="UP000001940">
    <property type="component" value="Chromosome X"/>
</dbReference>
<dbReference type="Bgee" id="WBGene00011104">
    <property type="expression patterns" value="Expressed in embryo and 3 other cell types or tissues"/>
</dbReference>
<dbReference type="ExpressionAtlas" id="Q21808">
    <property type="expression patterns" value="baseline and differential"/>
</dbReference>
<dbReference type="GO" id="GO:0005886">
    <property type="term" value="C:plasma membrane"/>
    <property type="evidence" value="ECO:0007669"/>
    <property type="project" value="UniProtKB-SubCell"/>
</dbReference>
<dbReference type="GO" id="GO:0042302">
    <property type="term" value="F:structural constituent of cuticle"/>
    <property type="evidence" value="ECO:0007669"/>
    <property type="project" value="UniProtKB-KW"/>
</dbReference>
<dbReference type="InterPro" id="IPR056953">
    <property type="entry name" value="CUT_N"/>
</dbReference>
<dbReference type="InterPro" id="IPR051962">
    <property type="entry name" value="Cuticlin"/>
</dbReference>
<dbReference type="InterPro" id="IPR001507">
    <property type="entry name" value="ZP_dom"/>
</dbReference>
<dbReference type="PANTHER" id="PTHR22907:SF11">
    <property type="entry name" value="CUTICLIN-5"/>
    <property type="match status" value="1"/>
</dbReference>
<dbReference type="PANTHER" id="PTHR22907">
    <property type="entry name" value="GH04558P"/>
    <property type="match status" value="1"/>
</dbReference>
<dbReference type="Pfam" id="PF25301">
    <property type="entry name" value="CUT_C"/>
    <property type="match status" value="1"/>
</dbReference>
<dbReference type="Pfam" id="PF25057">
    <property type="entry name" value="CUT_N"/>
    <property type="match status" value="1"/>
</dbReference>
<dbReference type="SMART" id="SM00241">
    <property type="entry name" value="ZP"/>
    <property type="match status" value="1"/>
</dbReference>
<dbReference type="PROSITE" id="PS51034">
    <property type="entry name" value="ZP_2"/>
    <property type="match status" value="1"/>
</dbReference>
<organism evidence="7">
    <name type="scientific">Caenorhabditis elegans</name>
    <dbReference type="NCBI Taxonomy" id="6239"/>
    <lineage>
        <taxon>Eukaryota</taxon>
        <taxon>Metazoa</taxon>
        <taxon>Ecdysozoa</taxon>
        <taxon>Nematoda</taxon>
        <taxon>Chromadorea</taxon>
        <taxon>Rhabditida</taxon>
        <taxon>Rhabditina</taxon>
        <taxon>Rhabditomorpha</taxon>
        <taxon>Rhabditoidea</taxon>
        <taxon>Rhabditidae</taxon>
        <taxon>Peloderinae</taxon>
        <taxon>Caenorhabditis</taxon>
    </lineage>
</organism>
<name>CUT5_CAEEL</name>
<protein>
    <recommendedName>
        <fullName evidence="8">Cuticlin-5</fullName>
    </recommendedName>
</protein>
<proteinExistence type="evidence at transcript level"/>